<gene>
    <name evidence="1" type="primary">moaC</name>
    <name type="ordered locus">Ping_2169</name>
</gene>
<proteinExistence type="inferred from homology"/>
<dbReference type="EC" id="4.6.1.17" evidence="1"/>
<dbReference type="EMBL" id="CP000510">
    <property type="protein sequence ID" value="ABM03910.1"/>
    <property type="molecule type" value="Genomic_DNA"/>
</dbReference>
<dbReference type="RefSeq" id="WP_011770470.1">
    <property type="nucleotide sequence ID" value="NC_008709.1"/>
</dbReference>
<dbReference type="SMR" id="A1SWP5"/>
<dbReference type="STRING" id="357804.Ping_2169"/>
<dbReference type="KEGG" id="pin:Ping_2169"/>
<dbReference type="eggNOG" id="COG0315">
    <property type="taxonomic scope" value="Bacteria"/>
</dbReference>
<dbReference type="HOGENOM" id="CLU_074693_1_1_6"/>
<dbReference type="OrthoDB" id="9794429at2"/>
<dbReference type="UniPathway" id="UPA00344"/>
<dbReference type="Proteomes" id="UP000000639">
    <property type="component" value="Chromosome"/>
</dbReference>
<dbReference type="GO" id="GO:0061799">
    <property type="term" value="F:cyclic pyranopterin monophosphate synthase activity"/>
    <property type="evidence" value="ECO:0007669"/>
    <property type="project" value="UniProtKB-UniRule"/>
</dbReference>
<dbReference type="GO" id="GO:0061798">
    <property type="term" value="F:GTP 3',8'-cyclase activity"/>
    <property type="evidence" value="ECO:0007669"/>
    <property type="project" value="TreeGrafter"/>
</dbReference>
<dbReference type="GO" id="GO:0006777">
    <property type="term" value="P:Mo-molybdopterin cofactor biosynthetic process"/>
    <property type="evidence" value="ECO:0007669"/>
    <property type="project" value="UniProtKB-UniRule"/>
</dbReference>
<dbReference type="CDD" id="cd01420">
    <property type="entry name" value="MoaC_PE"/>
    <property type="match status" value="1"/>
</dbReference>
<dbReference type="FunFam" id="3.30.70.640:FF:000001">
    <property type="entry name" value="Cyclic pyranopterin monophosphate synthase"/>
    <property type="match status" value="1"/>
</dbReference>
<dbReference type="Gene3D" id="3.30.70.640">
    <property type="entry name" value="Molybdopterin cofactor biosynthesis C (MoaC) domain"/>
    <property type="match status" value="1"/>
</dbReference>
<dbReference type="HAMAP" id="MF_01224_B">
    <property type="entry name" value="MoaC_B"/>
    <property type="match status" value="1"/>
</dbReference>
<dbReference type="InterPro" id="IPR023045">
    <property type="entry name" value="MoaC"/>
</dbReference>
<dbReference type="InterPro" id="IPR047594">
    <property type="entry name" value="MoaC_bact/euk"/>
</dbReference>
<dbReference type="InterPro" id="IPR036522">
    <property type="entry name" value="MoaC_sf"/>
</dbReference>
<dbReference type="InterPro" id="IPR050105">
    <property type="entry name" value="MoCo_biosynth_MoaA/MoaC"/>
</dbReference>
<dbReference type="InterPro" id="IPR002820">
    <property type="entry name" value="Mopterin_CF_biosynth-C_dom"/>
</dbReference>
<dbReference type="NCBIfam" id="TIGR00581">
    <property type="entry name" value="moaC"/>
    <property type="match status" value="1"/>
</dbReference>
<dbReference type="NCBIfam" id="NF006870">
    <property type="entry name" value="PRK09364.1"/>
    <property type="match status" value="1"/>
</dbReference>
<dbReference type="PANTHER" id="PTHR22960:SF0">
    <property type="entry name" value="MOLYBDENUM COFACTOR BIOSYNTHESIS PROTEIN 1"/>
    <property type="match status" value="1"/>
</dbReference>
<dbReference type="PANTHER" id="PTHR22960">
    <property type="entry name" value="MOLYBDOPTERIN COFACTOR SYNTHESIS PROTEIN A"/>
    <property type="match status" value="1"/>
</dbReference>
<dbReference type="Pfam" id="PF01967">
    <property type="entry name" value="MoaC"/>
    <property type="match status" value="1"/>
</dbReference>
<dbReference type="SUPFAM" id="SSF55040">
    <property type="entry name" value="Molybdenum cofactor biosynthesis protein C, MoaC"/>
    <property type="match status" value="1"/>
</dbReference>
<reference key="1">
    <citation type="journal article" date="2008" name="BMC Genomics">
        <title>Genomics of an extreme psychrophile, Psychromonas ingrahamii.</title>
        <authorList>
            <person name="Riley M."/>
            <person name="Staley J.T."/>
            <person name="Danchin A."/>
            <person name="Wang T.Z."/>
            <person name="Brettin T.S."/>
            <person name="Hauser L.J."/>
            <person name="Land M.L."/>
            <person name="Thompson L.S."/>
        </authorList>
    </citation>
    <scope>NUCLEOTIDE SEQUENCE [LARGE SCALE GENOMIC DNA]</scope>
    <source>
        <strain>DSM 17664 / CCUG 51855 / 37</strain>
    </source>
</reference>
<comment type="function">
    <text evidence="1">Catalyzes the conversion of (8S)-3',8-cyclo-7,8-dihydroguanosine 5'-triphosphate to cyclic pyranopterin monophosphate (cPMP).</text>
</comment>
<comment type="catalytic activity">
    <reaction evidence="1">
        <text>(8S)-3',8-cyclo-7,8-dihydroguanosine 5'-triphosphate = cyclic pyranopterin phosphate + diphosphate</text>
        <dbReference type="Rhea" id="RHEA:49580"/>
        <dbReference type="ChEBI" id="CHEBI:33019"/>
        <dbReference type="ChEBI" id="CHEBI:59648"/>
        <dbReference type="ChEBI" id="CHEBI:131766"/>
        <dbReference type="EC" id="4.6.1.17"/>
    </reaction>
</comment>
<comment type="pathway">
    <text evidence="1">Cofactor biosynthesis; molybdopterin biosynthesis.</text>
</comment>
<comment type="subunit">
    <text evidence="1">Homohexamer; trimer of dimers.</text>
</comment>
<comment type="similarity">
    <text evidence="1">Belongs to the MoaC family.</text>
</comment>
<name>MOAC_PSYIN</name>
<sequence>MTHLFTHINQDGKANMVDVTDKNTTQRQAIAQAYVEMKAETLALILNGQHHKGDVFATARIAGIMAAKKTSDIIPLCHPLALTKVEVELVAEPEFNRVRIQSLCKLSGKTGVEMEALTAASVAALTIYDMCKAIQKDMVITQVKLLEKTGGKSGHFTSQ</sequence>
<accession>A1SWP5</accession>
<evidence type="ECO:0000255" key="1">
    <source>
        <dbReference type="HAMAP-Rule" id="MF_01224"/>
    </source>
</evidence>
<protein>
    <recommendedName>
        <fullName evidence="1">Cyclic pyranopterin monophosphate synthase</fullName>
        <ecNumber evidence="1">4.6.1.17</ecNumber>
    </recommendedName>
    <alternativeName>
        <fullName evidence="1">Molybdenum cofactor biosynthesis protein C</fullName>
    </alternativeName>
</protein>
<organism>
    <name type="scientific">Psychromonas ingrahamii (strain DSM 17664 / CCUG 51855 / 37)</name>
    <dbReference type="NCBI Taxonomy" id="357804"/>
    <lineage>
        <taxon>Bacteria</taxon>
        <taxon>Pseudomonadati</taxon>
        <taxon>Pseudomonadota</taxon>
        <taxon>Gammaproteobacteria</taxon>
        <taxon>Alteromonadales</taxon>
        <taxon>Psychromonadaceae</taxon>
        <taxon>Psychromonas</taxon>
    </lineage>
</organism>
<feature type="chain" id="PRO_1000054124" description="Cyclic pyranopterin monophosphate synthase">
    <location>
        <begin position="1"/>
        <end position="159"/>
    </location>
</feature>
<feature type="active site" evidence="1">
    <location>
        <position position="129"/>
    </location>
</feature>
<feature type="binding site" evidence="1">
    <location>
        <begin position="76"/>
        <end position="78"/>
    </location>
    <ligand>
        <name>substrate</name>
    </ligand>
</feature>
<feature type="binding site" evidence="1">
    <location>
        <begin position="114"/>
        <end position="115"/>
    </location>
    <ligand>
        <name>substrate</name>
    </ligand>
</feature>
<keyword id="KW-0456">Lyase</keyword>
<keyword id="KW-0501">Molybdenum cofactor biosynthesis</keyword>
<keyword id="KW-1185">Reference proteome</keyword>